<evidence type="ECO:0000255" key="1">
    <source>
        <dbReference type="HAMAP-Rule" id="MF_00464"/>
    </source>
</evidence>
<proteinExistence type="inferred from homology"/>
<name>SPEH_CALBD</name>
<dbReference type="EC" id="4.1.1.50" evidence="1"/>
<dbReference type="EMBL" id="CP001393">
    <property type="protein sequence ID" value="ACM61197.1"/>
    <property type="molecule type" value="Genomic_DNA"/>
</dbReference>
<dbReference type="SMR" id="B9MLX4"/>
<dbReference type="STRING" id="521460.Athe_2122"/>
<dbReference type="GeneID" id="31773471"/>
<dbReference type="KEGG" id="ate:Athe_2122"/>
<dbReference type="eggNOG" id="COG1586">
    <property type="taxonomic scope" value="Bacteria"/>
</dbReference>
<dbReference type="HOGENOM" id="CLU_125470_2_3_9"/>
<dbReference type="UniPathway" id="UPA00331">
    <property type="reaction ID" value="UER00451"/>
</dbReference>
<dbReference type="Proteomes" id="UP000007723">
    <property type="component" value="Chromosome"/>
</dbReference>
<dbReference type="GO" id="GO:0005829">
    <property type="term" value="C:cytosol"/>
    <property type="evidence" value="ECO:0007669"/>
    <property type="project" value="TreeGrafter"/>
</dbReference>
<dbReference type="GO" id="GO:0004014">
    <property type="term" value="F:adenosylmethionine decarboxylase activity"/>
    <property type="evidence" value="ECO:0007669"/>
    <property type="project" value="UniProtKB-UniRule"/>
</dbReference>
<dbReference type="GO" id="GO:0008295">
    <property type="term" value="P:spermidine biosynthetic process"/>
    <property type="evidence" value="ECO:0007669"/>
    <property type="project" value="UniProtKB-UniRule"/>
</dbReference>
<dbReference type="FunFam" id="3.30.360.110:FF:000001">
    <property type="entry name" value="S-adenosylmethionine decarboxylase proenzyme"/>
    <property type="match status" value="1"/>
</dbReference>
<dbReference type="Gene3D" id="3.30.160.750">
    <property type="match status" value="1"/>
</dbReference>
<dbReference type="Gene3D" id="3.30.360.110">
    <property type="entry name" value="S-adenosylmethionine decarboxylase domain"/>
    <property type="match status" value="1"/>
</dbReference>
<dbReference type="HAMAP" id="MF_00464">
    <property type="entry name" value="AdoMetDC_1"/>
    <property type="match status" value="1"/>
</dbReference>
<dbReference type="InterPro" id="IPR042286">
    <property type="entry name" value="AdoMetDC_C"/>
</dbReference>
<dbReference type="InterPro" id="IPR003826">
    <property type="entry name" value="AdoMetDC_fam_prok"/>
</dbReference>
<dbReference type="InterPro" id="IPR042284">
    <property type="entry name" value="AdoMetDC_N"/>
</dbReference>
<dbReference type="InterPro" id="IPR016067">
    <property type="entry name" value="S-AdoMet_deCO2ase_core"/>
</dbReference>
<dbReference type="InterPro" id="IPR017716">
    <property type="entry name" value="S-AdoMet_deCOase_pro-enz"/>
</dbReference>
<dbReference type="NCBIfam" id="TIGR03330">
    <property type="entry name" value="SAM_DCase_Bsu"/>
    <property type="match status" value="1"/>
</dbReference>
<dbReference type="PANTHER" id="PTHR33866">
    <property type="entry name" value="S-ADENOSYLMETHIONINE DECARBOXYLASE PROENZYME"/>
    <property type="match status" value="1"/>
</dbReference>
<dbReference type="PANTHER" id="PTHR33866:SF2">
    <property type="entry name" value="S-ADENOSYLMETHIONINE DECARBOXYLASE PROENZYME"/>
    <property type="match status" value="1"/>
</dbReference>
<dbReference type="Pfam" id="PF02675">
    <property type="entry name" value="AdoMet_dc"/>
    <property type="match status" value="1"/>
</dbReference>
<dbReference type="SUPFAM" id="SSF56276">
    <property type="entry name" value="S-adenosylmethionine decarboxylase"/>
    <property type="match status" value="1"/>
</dbReference>
<protein>
    <recommendedName>
        <fullName evidence="1">S-adenosylmethionine decarboxylase proenzyme</fullName>
        <shortName evidence="1">AdoMetDC</shortName>
        <shortName evidence="1">SAMDC</shortName>
        <ecNumber evidence="1">4.1.1.50</ecNumber>
    </recommendedName>
    <component>
        <recommendedName>
            <fullName evidence="1">S-adenosylmethionine decarboxylase beta chain</fullName>
        </recommendedName>
    </component>
    <component>
        <recommendedName>
            <fullName evidence="1">S-adenosylmethionine decarboxylase alpha chain</fullName>
        </recommendedName>
    </component>
</protein>
<gene>
    <name evidence="1" type="primary">speH</name>
    <name type="ordered locus">Athe_2122</name>
</gene>
<organism>
    <name type="scientific">Caldicellulosiruptor bescii (strain ATCC BAA-1888 / DSM 6725 / KCTC 15123 / Z-1320)</name>
    <name type="common">Anaerocellum thermophilum</name>
    <dbReference type="NCBI Taxonomy" id="521460"/>
    <lineage>
        <taxon>Bacteria</taxon>
        <taxon>Bacillati</taxon>
        <taxon>Bacillota</taxon>
        <taxon>Bacillota incertae sedis</taxon>
        <taxon>Caldicellulosiruptorales</taxon>
        <taxon>Caldicellulosiruptoraceae</taxon>
        <taxon>Caldicellulosiruptor</taxon>
    </lineage>
</organism>
<sequence>MHALGRHIIAELYGCDKEVLNNRELIEKIMVESALKAGAEVREVAFHKFSPQGVSGVVVISESHLTIHTWPELGYAAVDVFTCGERVDPWQACNYITEMLKASHMTTTEVKRGLFEQPVKVANL</sequence>
<keyword id="KW-0068">Autocatalytic cleavage</keyword>
<keyword id="KW-0210">Decarboxylase</keyword>
<keyword id="KW-0456">Lyase</keyword>
<keyword id="KW-0620">Polyamine biosynthesis</keyword>
<keyword id="KW-0670">Pyruvate</keyword>
<keyword id="KW-0949">S-adenosyl-L-methionine</keyword>
<keyword id="KW-0704">Schiff base</keyword>
<keyword id="KW-0745">Spermidine biosynthesis</keyword>
<keyword id="KW-0865">Zymogen</keyword>
<comment type="function">
    <text evidence="1">Catalyzes the decarboxylation of S-adenosylmethionine to S-adenosylmethioninamine (dcAdoMet), the propylamine donor required for the synthesis of the polyamines spermine and spermidine from the diamine putrescine.</text>
</comment>
<comment type="catalytic activity">
    <reaction evidence="1">
        <text>S-adenosyl-L-methionine + H(+) = S-adenosyl 3-(methylsulfanyl)propylamine + CO2</text>
        <dbReference type="Rhea" id="RHEA:15981"/>
        <dbReference type="ChEBI" id="CHEBI:15378"/>
        <dbReference type="ChEBI" id="CHEBI:16526"/>
        <dbReference type="ChEBI" id="CHEBI:57443"/>
        <dbReference type="ChEBI" id="CHEBI:59789"/>
        <dbReference type="EC" id="4.1.1.50"/>
    </reaction>
</comment>
<comment type="cofactor">
    <cofactor evidence="1">
        <name>pyruvate</name>
        <dbReference type="ChEBI" id="CHEBI:15361"/>
    </cofactor>
    <text evidence="1">Binds 1 pyruvoyl group covalently per subunit.</text>
</comment>
<comment type="pathway">
    <text evidence="1">Amine and polyamine biosynthesis; S-adenosylmethioninamine biosynthesis; S-adenosylmethioninamine from S-adenosyl-L-methionine: step 1/1.</text>
</comment>
<comment type="subunit">
    <text evidence="1">Heterotetramer of two alpha and two beta chains arranged as a dimer of alpha/beta heterodimers.</text>
</comment>
<comment type="PTM">
    <text evidence="1">Is synthesized initially as an inactive proenzyme. Formation of the active enzyme involves a self-maturation process in which the active site pyruvoyl group is generated from an internal serine residue via an autocatalytic post-translational modification. Two non-identical subunits are generated from the proenzyme in this reaction, and the pyruvate is formed at the N-terminus of the alpha chain, which is derived from the carboxyl end of the proenzyme. The post-translation cleavage follows an unusual pathway, termed non-hydrolytic serinolysis, in which the side chain hydroxyl group of the serine supplies its oxygen atom to form the C-terminus of the beta chain, while the remainder of the serine residue undergoes an oxidative deamination to produce ammonia and the pyruvoyl group blocking the N-terminus of the alpha chain.</text>
</comment>
<comment type="similarity">
    <text evidence="1">Belongs to the prokaryotic AdoMetDC family. Type 1 subfamily.</text>
</comment>
<accession>B9MLX4</accession>
<feature type="chain" id="PRO_1000193167" description="S-adenosylmethionine decarboxylase beta chain" evidence="1">
    <location>
        <begin position="1"/>
        <end position="62"/>
    </location>
</feature>
<feature type="chain" id="PRO_1000193168" description="S-adenosylmethionine decarboxylase alpha chain" evidence="1">
    <location>
        <begin position="63"/>
        <end position="124"/>
    </location>
</feature>
<feature type="active site" description="Schiff-base intermediate with substrate; via pyruvic acid" evidence="1">
    <location>
        <position position="63"/>
    </location>
</feature>
<feature type="active site" description="Proton acceptor; for processing activity" evidence="1">
    <location>
        <position position="68"/>
    </location>
</feature>
<feature type="active site" description="Proton donor; for catalytic activity" evidence="1">
    <location>
        <position position="83"/>
    </location>
</feature>
<feature type="site" description="Cleavage (non-hydrolytic); by autolysis" evidence="1">
    <location>
        <begin position="62"/>
        <end position="63"/>
    </location>
</feature>
<feature type="modified residue" description="Pyruvic acid (Ser); by autocatalysis" evidence="1">
    <location>
        <position position="63"/>
    </location>
</feature>
<reference key="1">
    <citation type="submission" date="2009-01" db="EMBL/GenBank/DDBJ databases">
        <title>Complete sequence of chromosome of Caldicellulosiruptor becscii DSM 6725.</title>
        <authorList>
            <person name="Lucas S."/>
            <person name="Copeland A."/>
            <person name="Lapidus A."/>
            <person name="Glavina del Rio T."/>
            <person name="Tice H."/>
            <person name="Bruce D."/>
            <person name="Goodwin L."/>
            <person name="Pitluck S."/>
            <person name="Sims D."/>
            <person name="Meincke L."/>
            <person name="Brettin T."/>
            <person name="Detter J.C."/>
            <person name="Han C."/>
            <person name="Larimer F."/>
            <person name="Land M."/>
            <person name="Hauser L."/>
            <person name="Kyrpides N."/>
            <person name="Ovchinnikova G."/>
            <person name="Kataeva I."/>
            <person name="Adams M.W.W."/>
        </authorList>
    </citation>
    <scope>NUCLEOTIDE SEQUENCE [LARGE SCALE GENOMIC DNA]</scope>
    <source>
        <strain>ATCC BAA-1888 / DSM 6725 / KCTC 15123 / Z-1320</strain>
    </source>
</reference>